<organism>
    <name type="scientific">Enterobacter agglomerans</name>
    <name type="common">Erwinia herbicola</name>
    <name type="synonym">Pantoea agglomerans</name>
    <dbReference type="NCBI Taxonomy" id="549"/>
    <lineage>
        <taxon>Bacteria</taxon>
        <taxon>Pseudomonadati</taxon>
        <taxon>Pseudomonadota</taxon>
        <taxon>Gammaproteobacteria</taxon>
        <taxon>Enterobacterales</taxon>
        <taxon>Erwiniaceae</taxon>
        <taxon>Pantoea</taxon>
        <taxon>Pantoea agglomerans group</taxon>
    </lineage>
</organism>
<proteinExistence type="inferred from homology"/>
<reference key="1">
    <citation type="journal article" date="1997" name="Mol. Microbiol.">
        <title>Intercontinental spread of promiscuous mercury-resistance transposons in environmental bacteria.</title>
        <authorList>
            <person name="Yurieva O."/>
            <person name="Kholodii G."/>
            <person name="Minakhin L."/>
            <person name="Gorlenko Z."/>
            <person name="Kalyaeva E."/>
            <person name="Mindlin S."/>
            <person name="Nikiforov V."/>
        </authorList>
    </citation>
    <scope>NUCLEOTIDE SEQUENCE [GENOMIC DNA]</scope>
</reference>
<accession>P94700</accession>
<comment type="function">
    <text evidence="1">Involved in mercury resistance. Probably transfers a mercuric ion from the periplasmic Hg(2+)-binding protein MerP to the cytoplasmic mercuric reductase MerA.</text>
</comment>
<comment type="subcellular location">
    <subcellularLocation>
        <location evidence="3">Cell inner membrane</location>
        <topology evidence="2">Multi-pass membrane protein</topology>
    </subcellularLocation>
</comment>
<comment type="similarity">
    <text evidence="3">Belongs to the MerT family.</text>
</comment>
<dbReference type="EMBL" id="Y08992">
    <property type="protein sequence ID" value="CAA70186.1"/>
    <property type="molecule type" value="Genomic_DNA"/>
</dbReference>
<dbReference type="GO" id="GO:0005886">
    <property type="term" value="C:plasma membrane"/>
    <property type="evidence" value="ECO:0007669"/>
    <property type="project" value="UniProtKB-SubCell"/>
</dbReference>
<dbReference type="GO" id="GO:0015097">
    <property type="term" value="F:mercury ion transmembrane transporter activity"/>
    <property type="evidence" value="ECO:0007669"/>
    <property type="project" value="InterPro"/>
</dbReference>
<dbReference type="GO" id="GO:0046872">
    <property type="term" value="F:metal ion binding"/>
    <property type="evidence" value="ECO:0007669"/>
    <property type="project" value="UniProtKB-KW"/>
</dbReference>
<dbReference type="Gene3D" id="1.10.287.910">
    <property type="entry name" value="bacterial mercury transporter, merf"/>
    <property type="match status" value="1"/>
</dbReference>
<dbReference type="InterPro" id="IPR003457">
    <property type="entry name" value="Transprt_MerT"/>
</dbReference>
<dbReference type="NCBIfam" id="NF010314">
    <property type="entry name" value="PRK13751.2"/>
    <property type="match status" value="1"/>
</dbReference>
<dbReference type="Pfam" id="PF02411">
    <property type="entry name" value="MerT"/>
    <property type="match status" value="1"/>
</dbReference>
<sequence>MSEPQKSEPQKSEPQNGRGALFAGGLAAILASACCLGPLVLIALGFSGAWIGNLTVLEPYRPIFIGAALVALFFAWRRIYRPAQACKPGEVCAIPQVRATYKLIFWIVAALVLVSLGFPYVMPFFY</sequence>
<keyword id="KW-0997">Cell inner membrane</keyword>
<keyword id="KW-1003">Cell membrane</keyword>
<keyword id="KW-0472">Membrane</keyword>
<keyword id="KW-0475">Mercuric resistance</keyword>
<keyword id="KW-0476">Mercury</keyword>
<keyword id="KW-0479">Metal-binding</keyword>
<keyword id="KW-0614">Plasmid</keyword>
<keyword id="KW-0812">Transmembrane</keyword>
<keyword id="KW-1133">Transmembrane helix</keyword>
<keyword id="KW-0813">Transport</keyword>
<protein>
    <recommendedName>
        <fullName evidence="1">Mercuric transport protein MerT</fullName>
    </recommendedName>
    <alternativeName>
        <fullName evidence="1">Mercury ion transport protein</fullName>
    </alternativeName>
</protein>
<geneLocation type="plasmid">
    <name>pKLH272</name>
</geneLocation>
<evidence type="ECO:0000250" key="1">
    <source>
        <dbReference type="UniProtKB" id="P04140"/>
    </source>
</evidence>
<evidence type="ECO:0000255" key="2"/>
<evidence type="ECO:0000305" key="3"/>
<gene>
    <name type="primary">merT</name>
</gene>
<name>MERT_ENTAG</name>
<feature type="chain" id="PRO_0000096429" description="Mercuric transport protein MerT">
    <location>
        <begin position="1"/>
        <end position="126"/>
    </location>
</feature>
<feature type="transmembrane region" description="Helical" evidence="2">
    <location>
        <begin position="26"/>
        <end position="46"/>
    </location>
</feature>
<feature type="transmembrane region" description="Helical" evidence="2">
    <location>
        <begin position="54"/>
        <end position="74"/>
    </location>
</feature>
<feature type="transmembrane region" description="Helical" evidence="2">
    <location>
        <begin position="104"/>
        <end position="124"/>
    </location>
</feature>
<feature type="binding site" evidence="1">
    <location>
        <position position="34"/>
    </location>
    <ligand>
        <name>Hg(2+)</name>
        <dbReference type="ChEBI" id="CHEBI:16793"/>
    </ligand>
</feature>
<feature type="binding site" evidence="1">
    <location>
        <position position="35"/>
    </location>
    <ligand>
        <name>Hg(2+)</name>
        <dbReference type="ChEBI" id="CHEBI:16793"/>
    </ligand>
</feature>
<feature type="binding site" evidence="1">
    <location>
        <position position="86"/>
    </location>
    <ligand>
        <name>Hg(2+)</name>
        <dbReference type="ChEBI" id="CHEBI:16793"/>
    </ligand>
</feature>
<feature type="binding site" evidence="1">
    <location>
        <position position="92"/>
    </location>
    <ligand>
        <name>Hg(2+)</name>
        <dbReference type="ChEBI" id="CHEBI:16793"/>
    </ligand>
</feature>